<keyword id="KW-0004">4Fe-4S</keyword>
<keyword id="KW-0997">Cell inner membrane</keyword>
<keyword id="KW-1003">Cell membrane</keyword>
<keyword id="KW-0408">Iron</keyword>
<keyword id="KW-0411">Iron-sulfur</keyword>
<keyword id="KW-0472">Membrane</keyword>
<keyword id="KW-0479">Metal-binding</keyword>
<keyword id="KW-0520">NAD</keyword>
<keyword id="KW-0874">Quinone</keyword>
<keyword id="KW-1185">Reference proteome</keyword>
<keyword id="KW-0677">Repeat</keyword>
<keyword id="KW-1278">Translocase</keyword>
<keyword id="KW-0830">Ubiquinone</keyword>
<sequence length="180" mass="20552">MTLKELLVGFGTQVRSIWMIGLHAFAKRETRMYPEEPIYLPPRYRGRIVLTRDPDGEERCVACNLCAVACPVGCISLQKAETKDGRWYPEFFRINFSRCIFCGLCEEACPTTAIQLTPDFEMGEYKRQDLVYEKEDLLISGPGKYPEYNFYRMAGMAIDGKDKGEAENEAKPIDVKSLLP</sequence>
<comment type="function">
    <text evidence="1">NDH-1 shuttles electrons from NADH, via FMN and iron-sulfur (Fe-S) centers, to quinones in the respiratory chain. The immediate electron acceptor for the enzyme in this species is believed to be ubiquinone. Couples the redox reaction to proton translocation (for every two electrons transferred, four hydrogen ions are translocated across the cytoplasmic membrane), and thus conserves the redox energy in a proton gradient.</text>
</comment>
<comment type="catalytic activity">
    <reaction evidence="1">
        <text>a quinone + NADH + 5 H(+)(in) = a quinol + NAD(+) + 4 H(+)(out)</text>
        <dbReference type="Rhea" id="RHEA:57888"/>
        <dbReference type="ChEBI" id="CHEBI:15378"/>
        <dbReference type="ChEBI" id="CHEBI:24646"/>
        <dbReference type="ChEBI" id="CHEBI:57540"/>
        <dbReference type="ChEBI" id="CHEBI:57945"/>
        <dbReference type="ChEBI" id="CHEBI:132124"/>
    </reaction>
</comment>
<comment type="cofactor">
    <cofactor evidence="1">
        <name>[4Fe-4S] cluster</name>
        <dbReference type="ChEBI" id="CHEBI:49883"/>
    </cofactor>
    <text evidence="1">Binds 2 [4Fe-4S] clusters per subunit.</text>
</comment>
<comment type="subunit">
    <text evidence="1">NDH-1 is composed of 13 different subunits. Subunits NuoA, H, J, K, L, M, N constitute the membrane sector of the complex.</text>
</comment>
<comment type="subcellular location">
    <subcellularLocation>
        <location evidence="1">Cell inner membrane</location>
        <topology evidence="1">Peripheral membrane protein</topology>
    </subcellularLocation>
</comment>
<comment type="similarity">
    <text evidence="1">Belongs to the complex I 23 kDa subunit family.</text>
</comment>
<protein>
    <recommendedName>
        <fullName evidence="1">NADH-quinone oxidoreductase subunit I</fullName>
        <ecNumber evidence="1">7.1.1.-</ecNumber>
    </recommendedName>
    <alternativeName>
        <fullName evidence="1">NADH dehydrogenase I subunit I</fullName>
    </alternativeName>
    <alternativeName>
        <fullName evidence="1">NDH-1 subunit I</fullName>
    </alternativeName>
</protein>
<dbReference type="EC" id="7.1.1.-" evidence="1"/>
<dbReference type="EMBL" id="CP000038">
    <property type="protein sequence ID" value="AAZ88983.1"/>
    <property type="molecule type" value="Genomic_DNA"/>
</dbReference>
<dbReference type="RefSeq" id="WP_000172743.1">
    <property type="nucleotide sequence ID" value="NC_007384.1"/>
</dbReference>
<dbReference type="SMR" id="Q3YZS9"/>
<dbReference type="GeneID" id="93774893"/>
<dbReference type="KEGG" id="ssn:SSON_2338"/>
<dbReference type="HOGENOM" id="CLU_067218_4_3_6"/>
<dbReference type="Proteomes" id="UP000002529">
    <property type="component" value="Chromosome"/>
</dbReference>
<dbReference type="GO" id="GO:0005886">
    <property type="term" value="C:plasma membrane"/>
    <property type="evidence" value="ECO:0007669"/>
    <property type="project" value="UniProtKB-SubCell"/>
</dbReference>
<dbReference type="GO" id="GO:0051539">
    <property type="term" value="F:4 iron, 4 sulfur cluster binding"/>
    <property type="evidence" value="ECO:0007669"/>
    <property type="project" value="UniProtKB-KW"/>
</dbReference>
<dbReference type="GO" id="GO:0005506">
    <property type="term" value="F:iron ion binding"/>
    <property type="evidence" value="ECO:0007669"/>
    <property type="project" value="UniProtKB-UniRule"/>
</dbReference>
<dbReference type="GO" id="GO:0050136">
    <property type="term" value="F:NADH:ubiquinone reductase (non-electrogenic) activity"/>
    <property type="evidence" value="ECO:0007669"/>
    <property type="project" value="UniProtKB-UniRule"/>
</dbReference>
<dbReference type="GO" id="GO:0048038">
    <property type="term" value="F:quinone binding"/>
    <property type="evidence" value="ECO:0007669"/>
    <property type="project" value="UniProtKB-KW"/>
</dbReference>
<dbReference type="GO" id="GO:0009060">
    <property type="term" value="P:aerobic respiration"/>
    <property type="evidence" value="ECO:0007669"/>
    <property type="project" value="TreeGrafter"/>
</dbReference>
<dbReference type="FunFam" id="3.30.70.3270:FF:000002">
    <property type="entry name" value="NADH-quinone oxidoreductase subunit I"/>
    <property type="match status" value="1"/>
</dbReference>
<dbReference type="Gene3D" id="3.30.70.3270">
    <property type="match status" value="1"/>
</dbReference>
<dbReference type="HAMAP" id="MF_01351">
    <property type="entry name" value="NDH1_NuoI"/>
    <property type="match status" value="1"/>
</dbReference>
<dbReference type="InterPro" id="IPR017896">
    <property type="entry name" value="4Fe4S_Fe-S-bd"/>
</dbReference>
<dbReference type="InterPro" id="IPR017900">
    <property type="entry name" value="4Fe4S_Fe_S_CS"/>
</dbReference>
<dbReference type="InterPro" id="IPR010226">
    <property type="entry name" value="NADH_quinone_OxRdtase_chainI"/>
</dbReference>
<dbReference type="NCBIfam" id="TIGR01971">
    <property type="entry name" value="NuoI"/>
    <property type="match status" value="1"/>
</dbReference>
<dbReference type="NCBIfam" id="NF004536">
    <property type="entry name" value="PRK05888.1-1"/>
    <property type="match status" value="1"/>
</dbReference>
<dbReference type="PANTHER" id="PTHR10849:SF20">
    <property type="entry name" value="NADH DEHYDROGENASE [UBIQUINONE] IRON-SULFUR PROTEIN 8, MITOCHONDRIAL"/>
    <property type="match status" value="1"/>
</dbReference>
<dbReference type="PANTHER" id="PTHR10849">
    <property type="entry name" value="NADH DEHYDROGENASE UBIQUINONE IRON-SULFUR PROTEIN 8, MITOCHONDRIAL"/>
    <property type="match status" value="1"/>
</dbReference>
<dbReference type="Pfam" id="PF12838">
    <property type="entry name" value="Fer4_7"/>
    <property type="match status" value="1"/>
</dbReference>
<dbReference type="SUPFAM" id="SSF54862">
    <property type="entry name" value="4Fe-4S ferredoxins"/>
    <property type="match status" value="1"/>
</dbReference>
<dbReference type="PROSITE" id="PS00198">
    <property type="entry name" value="4FE4S_FER_1"/>
    <property type="match status" value="2"/>
</dbReference>
<dbReference type="PROSITE" id="PS51379">
    <property type="entry name" value="4FE4S_FER_2"/>
    <property type="match status" value="2"/>
</dbReference>
<feature type="chain" id="PRO_0000245748" description="NADH-quinone oxidoreductase subunit I">
    <location>
        <begin position="1"/>
        <end position="180"/>
    </location>
</feature>
<feature type="domain" description="4Fe-4S ferredoxin-type 1" evidence="1">
    <location>
        <begin position="50"/>
        <end position="80"/>
    </location>
</feature>
<feature type="domain" description="4Fe-4S ferredoxin-type 2" evidence="1">
    <location>
        <begin position="90"/>
        <end position="119"/>
    </location>
</feature>
<feature type="binding site" evidence="1">
    <location>
        <position position="60"/>
    </location>
    <ligand>
        <name>[4Fe-4S] cluster</name>
        <dbReference type="ChEBI" id="CHEBI:49883"/>
        <label>1</label>
    </ligand>
</feature>
<feature type="binding site" evidence="1">
    <location>
        <position position="63"/>
    </location>
    <ligand>
        <name>[4Fe-4S] cluster</name>
        <dbReference type="ChEBI" id="CHEBI:49883"/>
        <label>1</label>
    </ligand>
</feature>
<feature type="binding site" evidence="1">
    <location>
        <position position="66"/>
    </location>
    <ligand>
        <name>[4Fe-4S] cluster</name>
        <dbReference type="ChEBI" id="CHEBI:49883"/>
        <label>1</label>
    </ligand>
</feature>
<feature type="binding site" evidence="1">
    <location>
        <position position="70"/>
    </location>
    <ligand>
        <name>[4Fe-4S] cluster</name>
        <dbReference type="ChEBI" id="CHEBI:49883"/>
        <label>2</label>
    </ligand>
</feature>
<feature type="binding site" evidence="1">
    <location>
        <position position="99"/>
    </location>
    <ligand>
        <name>[4Fe-4S] cluster</name>
        <dbReference type="ChEBI" id="CHEBI:49883"/>
        <label>2</label>
    </ligand>
</feature>
<feature type="binding site" evidence="1">
    <location>
        <position position="102"/>
    </location>
    <ligand>
        <name>[4Fe-4S] cluster</name>
        <dbReference type="ChEBI" id="CHEBI:49883"/>
        <label>2</label>
    </ligand>
</feature>
<feature type="binding site" evidence="1">
    <location>
        <position position="105"/>
    </location>
    <ligand>
        <name>[4Fe-4S] cluster</name>
        <dbReference type="ChEBI" id="CHEBI:49883"/>
        <label>2</label>
    </ligand>
</feature>
<feature type="binding site" evidence="1">
    <location>
        <position position="109"/>
    </location>
    <ligand>
        <name>[4Fe-4S] cluster</name>
        <dbReference type="ChEBI" id="CHEBI:49883"/>
        <label>1</label>
    </ligand>
</feature>
<name>NUOI_SHISS</name>
<reference key="1">
    <citation type="journal article" date="2005" name="Nucleic Acids Res.">
        <title>Genome dynamics and diversity of Shigella species, the etiologic agents of bacillary dysentery.</title>
        <authorList>
            <person name="Yang F."/>
            <person name="Yang J."/>
            <person name="Zhang X."/>
            <person name="Chen L."/>
            <person name="Jiang Y."/>
            <person name="Yan Y."/>
            <person name="Tang X."/>
            <person name="Wang J."/>
            <person name="Xiong Z."/>
            <person name="Dong J."/>
            <person name="Xue Y."/>
            <person name="Zhu Y."/>
            <person name="Xu X."/>
            <person name="Sun L."/>
            <person name="Chen S."/>
            <person name="Nie H."/>
            <person name="Peng J."/>
            <person name="Xu J."/>
            <person name="Wang Y."/>
            <person name="Yuan Z."/>
            <person name="Wen Y."/>
            <person name="Yao Z."/>
            <person name="Shen Y."/>
            <person name="Qiang B."/>
            <person name="Hou Y."/>
            <person name="Yu J."/>
            <person name="Jin Q."/>
        </authorList>
    </citation>
    <scope>NUCLEOTIDE SEQUENCE [LARGE SCALE GENOMIC DNA]</scope>
    <source>
        <strain>Ss046</strain>
    </source>
</reference>
<organism>
    <name type="scientific">Shigella sonnei (strain Ss046)</name>
    <dbReference type="NCBI Taxonomy" id="300269"/>
    <lineage>
        <taxon>Bacteria</taxon>
        <taxon>Pseudomonadati</taxon>
        <taxon>Pseudomonadota</taxon>
        <taxon>Gammaproteobacteria</taxon>
        <taxon>Enterobacterales</taxon>
        <taxon>Enterobacteriaceae</taxon>
        <taxon>Shigella</taxon>
    </lineage>
</organism>
<accession>Q3YZS9</accession>
<gene>
    <name evidence="1" type="primary">nuoI</name>
    <name type="ordered locus">SSON_2338</name>
</gene>
<proteinExistence type="inferred from homology"/>
<evidence type="ECO:0000255" key="1">
    <source>
        <dbReference type="HAMAP-Rule" id="MF_01351"/>
    </source>
</evidence>